<feature type="chain" id="PRO_0000324196" description="Nuclear export protein">
    <location>
        <begin position="1"/>
        <end position="121"/>
    </location>
</feature>
<feature type="short sequence motif" description="Nuclear export signal" evidence="1">
    <location>
        <begin position="12"/>
        <end position="21"/>
    </location>
</feature>
<feature type="short sequence motif" description="Nuclear export signal" evidence="1">
    <location>
        <begin position="85"/>
        <end position="94"/>
    </location>
</feature>
<keyword id="KW-0025">Alternative splicing</keyword>
<keyword id="KW-1048">Host nucleus</keyword>
<keyword id="KW-0945">Host-virus interaction</keyword>
<keyword id="KW-0813">Transport</keyword>
<keyword id="KW-0946">Virion</keyword>
<comment type="function">
    <text evidence="1">Mediates the nuclear export of encapsidated genomic RNAs (ribonucleoproteins, RNPs). Acts as an adapter between viral RNPs complexes and the nuclear export machinery of the cell. Possesses no intrinsic RNA-binding activity, but includes a C-terminal M1-binding domain. This domain is believed to allow recognition of RNPs bound to the protein M1. Since protein M1 is not available in large quantities before late stages of infection, such an indirect recognition mechanism probably ensures that genomic RNPs are not exported from the host nucleus until sufficient quantities of viral mRNA and progeny genomic RNA have been synthesized. Furthermore, the RNPs enter the host cytoplasm only when associated with the M1 protein that is necessary to guide them to the plasma membrane. May down-regulate viral RNA synthesis when overproduced.</text>
</comment>
<comment type="subunit">
    <text evidence="1">Interacts with protein M1. May interact with host nucleoporin RAB/HRB and exportin XPO1/CRM1.</text>
</comment>
<comment type="subcellular location">
    <subcellularLocation>
        <location evidence="1">Virion</location>
    </subcellularLocation>
    <subcellularLocation>
        <location evidence="1">Host nucleus</location>
    </subcellularLocation>
</comment>
<comment type="alternative products">
    <event type="alternative splicing"/>
    <isoform>
        <id>Q20P38-1</id>
        <name>NEP</name>
        <name>NS2</name>
        <sequence type="displayed"/>
    </isoform>
    <isoform>
        <id>O92551-1</id>
        <name>NS1</name>
        <sequence type="external"/>
    </isoform>
</comment>
<comment type="similarity">
    <text evidence="1">Belongs to the influenza viruses NEP family.</text>
</comment>
<organismHost>
    <name type="scientific">Aves</name>
    <dbReference type="NCBI Taxonomy" id="8782"/>
</organismHost>
<organismHost>
    <name type="scientific">Equus caballus</name>
    <name type="common">Horse</name>
    <dbReference type="NCBI Taxonomy" id="9796"/>
</organismHost>
<organismHost>
    <name type="scientific">Homo sapiens</name>
    <name type="common">Human</name>
    <dbReference type="NCBI Taxonomy" id="9606"/>
</organismHost>
<organismHost>
    <name type="scientific">Phocidae</name>
    <name type="common">true seals</name>
    <dbReference type="NCBI Taxonomy" id="9709"/>
</organismHost>
<proteinExistence type="inferred from homology"/>
<evidence type="ECO:0000255" key="1">
    <source>
        <dbReference type="HAMAP-Rule" id="MF_04067"/>
    </source>
</evidence>
<name>NEP_I56A3</name>
<gene>
    <name evidence="1" type="primary">NS</name>
</gene>
<sequence>MDSNTVSSFQDILTRMSKMQLRSSSEDLNGIITQFESLRFYRDSLGETVMRMGDFYSLQNKNKKWREQLGQKFEEIRWLIEEIRHKLKITENSFEQITFIQALQLLLEVEQEIRTFSFQLI</sequence>
<organism>
    <name type="scientific">Influenza A virus (strain A/Equine/Prague/1/1956 H7N7)</name>
    <dbReference type="NCBI Taxonomy" id="380337"/>
    <lineage>
        <taxon>Viruses</taxon>
        <taxon>Riboviria</taxon>
        <taxon>Orthornavirae</taxon>
        <taxon>Negarnaviricota</taxon>
        <taxon>Polyploviricotina</taxon>
        <taxon>Insthoviricetes</taxon>
        <taxon>Articulavirales</taxon>
        <taxon>Orthomyxoviridae</taxon>
        <taxon>Alphainfluenzavirus</taxon>
        <taxon>Alphainfluenzavirus influenzae</taxon>
        <taxon>Influenza A virus</taxon>
    </lineage>
</organism>
<accession>Q20P38</accession>
<accession>O09692</accession>
<protein>
    <recommendedName>
        <fullName evidence="1">Nuclear export protein</fullName>
        <shortName evidence="1">NEP</shortName>
    </recommendedName>
    <alternativeName>
        <fullName evidence="1">Non-structural protein 2</fullName>
        <shortName evidence="1">NS2</shortName>
    </alternativeName>
</protein>
<reference key="1">
    <citation type="journal article" date="1996" name="J. Virol.">
        <title>Emergence of avian H1N1 influenza viruses in pigs in China.</title>
        <authorList>
            <person name="Guan Y."/>
            <person name="Shortridge K.F."/>
            <person name="Krauss S."/>
            <person name="Li P.H."/>
            <person name="Kawaoka Y."/>
            <person name="Webster R.G."/>
        </authorList>
    </citation>
    <scope>NUCLEOTIDE SEQUENCE [GENOMIC RNA] OF 4-115</scope>
</reference>
<reference key="2">
    <citation type="journal article" date="2006" name="Science">
        <title>Large-scale sequence analysis of avian influenza isolates.</title>
        <authorList>
            <person name="Obenauer J.C."/>
            <person name="Denson J."/>
            <person name="Mehta P.K."/>
            <person name="Su X."/>
            <person name="Mukatira S."/>
            <person name="Finkelstein D.B."/>
            <person name="Xu X."/>
            <person name="Wang J."/>
            <person name="Ma J."/>
            <person name="Fan Y."/>
            <person name="Rakestraw K.M."/>
            <person name="Webster R.G."/>
            <person name="Hoffmann E."/>
            <person name="Krauss S."/>
            <person name="Zheng J."/>
            <person name="Zhang Z."/>
            <person name="Naeve C.W."/>
        </authorList>
    </citation>
    <scope>NUCLEOTIDE SEQUENCE [GENOMIC RNA]</scope>
</reference>
<dbReference type="EMBL" id="U49489">
    <property type="protein sequence ID" value="AAB51006.1"/>
    <property type="molecule type" value="Genomic_RNA"/>
</dbReference>
<dbReference type="EMBL" id="CY005804">
    <property type="protein sequence ID" value="ABB20504.1"/>
    <property type="molecule type" value="Genomic_RNA"/>
</dbReference>
<dbReference type="SMR" id="Q20P38"/>
<dbReference type="IntAct" id="Q20P38">
    <property type="interactions" value="18"/>
</dbReference>
<dbReference type="MINT" id="Q20P38"/>
<dbReference type="Proteomes" id="UP000121173">
    <property type="component" value="Genome"/>
</dbReference>
<dbReference type="GO" id="GO:0042025">
    <property type="term" value="C:host cell nucleus"/>
    <property type="evidence" value="ECO:0007669"/>
    <property type="project" value="UniProtKB-SubCell"/>
</dbReference>
<dbReference type="GO" id="GO:0044423">
    <property type="term" value="C:virion component"/>
    <property type="evidence" value="ECO:0007669"/>
    <property type="project" value="UniProtKB-UniRule"/>
</dbReference>
<dbReference type="GO" id="GO:0039675">
    <property type="term" value="P:exit of virus from host cell nucleus through nuclear pore"/>
    <property type="evidence" value="ECO:0007669"/>
    <property type="project" value="UniProtKB-UniRule"/>
</dbReference>
<dbReference type="Gene3D" id="1.10.287.230">
    <property type="match status" value="1"/>
</dbReference>
<dbReference type="HAMAP" id="MF_04067">
    <property type="entry name" value="INFV_NEP"/>
    <property type="match status" value="1"/>
</dbReference>
<dbReference type="InterPro" id="IPR000968">
    <property type="entry name" value="Flu_NS2"/>
</dbReference>
<dbReference type="Pfam" id="PF00601">
    <property type="entry name" value="Flu_NS2"/>
    <property type="match status" value="1"/>
</dbReference>
<dbReference type="SUPFAM" id="SSF101156">
    <property type="entry name" value="Nonstructural protein ns2, Nep, M1-binding domain"/>
    <property type="match status" value="1"/>
</dbReference>